<accession>Q8CWV1</accession>
<proteinExistence type="inferred from homology"/>
<protein>
    <recommendedName>
        <fullName evidence="1">Large ribosomal subunit protein uL30</fullName>
    </recommendedName>
    <alternativeName>
        <fullName evidence="2">50S ribosomal protein L30</fullName>
    </alternativeName>
</protein>
<reference key="1">
    <citation type="journal article" date="2001" name="J. Bacteriol.">
        <title>Genome of the bacterium Streptococcus pneumoniae strain R6.</title>
        <authorList>
            <person name="Hoskins J."/>
            <person name="Alborn W.E. Jr."/>
            <person name="Arnold J."/>
            <person name="Blaszczak L.C."/>
            <person name="Burgett S."/>
            <person name="DeHoff B.S."/>
            <person name="Estrem S.T."/>
            <person name="Fritz L."/>
            <person name="Fu D.-J."/>
            <person name="Fuller W."/>
            <person name="Geringer C."/>
            <person name="Gilmour R."/>
            <person name="Glass J.S."/>
            <person name="Khoja H."/>
            <person name="Kraft A.R."/>
            <person name="Lagace R.E."/>
            <person name="LeBlanc D.J."/>
            <person name="Lee L.N."/>
            <person name="Lefkowitz E.J."/>
            <person name="Lu J."/>
            <person name="Matsushima P."/>
            <person name="McAhren S.M."/>
            <person name="McHenney M."/>
            <person name="McLeaster K."/>
            <person name="Mundy C.W."/>
            <person name="Nicas T.I."/>
            <person name="Norris F.H."/>
            <person name="O'Gara M."/>
            <person name="Peery R.B."/>
            <person name="Robertson G.T."/>
            <person name="Rockey P."/>
            <person name="Sun P.-M."/>
            <person name="Winkler M.E."/>
            <person name="Yang Y."/>
            <person name="Young-Bellido M."/>
            <person name="Zhao G."/>
            <person name="Zook C.A."/>
            <person name="Baltz R.H."/>
            <person name="Jaskunas S.R."/>
            <person name="Rosteck P.R. Jr."/>
            <person name="Skatrud P.L."/>
            <person name="Glass J.I."/>
        </authorList>
    </citation>
    <scope>NUCLEOTIDE SEQUENCE [LARGE SCALE GENOMIC DNA]</scope>
    <source>
        <strain>ATCC BAA-255 / R6</strain>
    </source>
</reference>
<feature type="chain" id="PRO_0000273867" description="Large ribosomal subunit protein uL30">
    <location>
        <begin position="1"/>
        <end position="60"/>
    </location>
</feature>
<dbReference type="EMBL" id="AE007317">
    <property type="protein sequence ID" value="AAK99011.1"/>
    <property type="molecule type" value="Genomic_DNA"/>
</dbReference>
<dbReference type="PIR" id="G95026">
    <property type="entry name" value="G95026"/>
</dbReference>
<dbReference type="PIR" id="G97897">
    <property type="entry name" value="G97897"/>
</dbReference>
<dbReference type="RefSeq" id="NP_357801.1">
    <property type="nucleotide sequence ID" value="NC_003098.1"/>
</dbReference>
<dbReference type="RefSeq" id="WP_000057241.1">
    <property type="nucleotide sequence ID" value="NC_003098.1"/>
</dbReference>
<dbReference type="SMR" id="Q8CWV1"/>
<dbReference type="STRING" id="171101.spr0207"/>
<dbReference type="GeneID" id="93738975"/>
<dbReference type="KEGG" id="spr:spr0207"/>
<dbReference type="PATRIC" id="fig|171101.6.peg.239"/>
<dbReference type="eggNOG" id="COG1841">
    <property type="taxonomic scope" value="Bacteria"/>
</dbReference>
<dbReference type="HOGENOM" id="CLU_131047_2_1_9"/>
<dbReference type="PRO" id="PR:Q8CWV1"/>
<dbReference type="Proteomes" id="UP000000586">
    <property type="component" value="Chromosome"/>
</dbReference>
<dbReference type="GO" id="GO:0022625">
    <property type="term" value="C:cytosolic large ribosomal subunit"/>
    <property type="evidence" value="ECO:0000318"/>
    <property type="project" value="GO_Central"/>
</dbReference>
<dbReference type="GO" id="GO:0003735">
    <property type="term" value="F:structural constituent of ribosome"/>
    <property type="evidence" value="ECO:0007669"/>
    <property type="project" value="InterPro"/>
</dbReference>
<dbReference type="GO" id="GO:0006412">
    <property type="term" value="P:translation"/>
    <property type="evidence" value="ECO:0007669"/>
    <property type="project" value="UniProtKB-UniRule"/>
</dbReference>
<dbReference type="CDD" id="cd01658">
    <property type="entry name" value="Ribosomal_L30"/>
    <property type="match status" value="1"/>
</dbReference>
<dbReference type="FunFam" id="3.30.1390.20:FF:000001">
    <property type="entry name" value="50S ribosomal protein L30"/>
    <property type="match status" value="1"/>
</dbReference>
<dbReference type="Gene3D" id="3.30.1390.20">
    <property type="entry name" value="Ribosomal protein L30, ferredoxin-like fold domain"/>
    <property type="match status" value="1"/>
</dbReference>
<dbReference type="HAMAP" id="MF_01371_B">
    <property type="entry name" value="Ribosomal_uL30_B"/>
    <property type="match status" value="1"/>
</dbReference>
<dbReference type="InterPro" id="IPR036919">
    <property type="entry name" value="Ribo_uL30_ferredoxin-like_sf"/>
</dbReference>
<dbReference type="InterPro" id="IPR005996">
    <property type="entry name" value="Ribosomal_uL30_bac-type"/>
</dbReference>
<dbReference type="InterPro" id="IPR018038">
    <property type="entry name" value="Ribosomal_uL30_CS"/>
</dbReference>
<dbReference type="InterPro" id="IPR016082">
    <property type="entry name" value="Ribosomal_uL30_ferredoxin-like"/>
</dbReference>
<dbReference type="NCBIfam" id="TIGR01308">
    <property type="entry name" value="rpmD_bact"/>
    <property type="match status" value="1"/>
</dbReference>
<dbReference type="PANTHER" id="PTHR15892:SF2">
    <property type="entry name" value="LARGE RIBOSOMAL SUBUNIT PROTEIN UL30M"/>
    <property type="match status" value="1"/>
</dbReference>
<dbReference type="PANTHER" id="PTHR15892">
    <property type="entry name" value="MITOCHONDRIAL RIBOSOMAL PROTEIN L30"/>
    <property type="match status" value="1"/>
</dbReference>
<dbReference type="Pfam" id="PF00327">
    <property type="entry name" value="Ribosomal_L30"/>
    <property type="match status" value="1"/>
</dbReference>
<dbReference type="PIRSF" id="PIRSF002211">
    <property type="entry name" value="Ribosomal_L30_bac-type"/>
    <property type="match status" value="1"/>
</dbReference>
<dbReference type="SUPFAM" id="SSF55129">
    <property type="entry name" value="Ribosomal protein L30p/L7e"/>
    <property type="match status" value="1"/>
</dbReference>
<dbReference type="PROSITE" id="PS00634">
    <property type="entry name" value="RIBOSOMAL_L30"/>
    <property type="match status" value="1"/>
</dbReference>
<name>RL30_STRR6</name>
<keyword id="KW-1185">Reference proteome</keyword>
<keyword id="KW-0687">Ribonucleoprotein</keyword>
<keyword id="KW-0689">Ribosomal protein</keyword>
<sequence length="60" mass="6399">MAQIKITLTKSPIGRIPSQRKTVVALGLGKLNSSVIKEDNAAIRGMITAVSHLVTVEEVN</sequence>
<evidence type="ECO:0000255" key="1">
    <source>
        <dbReference type="HAMAP-Rule" id="MF_01371"/>
    </source>
</evidence>
<evidence type="ECO:0000305" key="2"/>
<organism>
    <name type="scientific">Streptococcus pneumoniae (strain ATCC BAA-255 / R6)</name>
    <dbReference type="NCBI Taxonomy" id="171101"/>
    <lineage>
        <taxon>Bacteria</taxon>
        <taxon>Bacillati</taxon>
        <taxon>Bacillota</taxon>
        <taxon>Bacilli</taxon>
        <taxon>Lactobacillales</taxon>
        <taxon>Streptococcaceae</taxon>
        <taxon>Streptococcus</taxon>
    </lineage>
</organism>
<gene>
    <name evidence="1" type="primary">rpmD</name>
    <name type="ordered locus">spr0207</name>
</gene>
<comment type="subunit">
    <text evidence="1">Part of the 50S ribosomal subunit.</text>
</comment>
<comment type="similarity">
    <text evidence="1">Belongs to the universal ribosomal protein uL30 family.</text>
</comment>